<gene>
    <name type="primary">LUX</name>
    <name type="synonym">PCL1</name>
    <name type="ordered locus">At3g46640</name>
    <name type="ORF">F12A12.160</name>
</gene>
<keyword id="KW-0002">3D-structure</keyword>
<keyword id="KW-0025">Alternative splicing</keyword>
<keyword id="KW-0090">Biological rhythms</keyword>
<keyword id="KW-0238">DNA-binding</keyword>
<keyword id="KW-0539">Nucleus</keyword>
<keyword id="KW-1185">Reference proteome</keyword>
<keyword id="KW-0804">Transcription</keyword>
<keyword id="KW-0805">Transcription regulation</keyword>
<reference key="1">
    <citation type="journal article" date="2005" name="Genes Cells">
        <title>PHYTOCLOCK 1 encoding a novel GARP protein essential for the Arabidopsis circadian clock.</title>
        <authorList>
            <person name="Onai K."/>
            <person name="Ishiura M."/>
        </authorList>
    </citation>
    <scope>NUCLEOTIDE SEQUENCE [GENOMIC DNA]</scope>
    <scope>FUNCTION</scope>
    <scope>SUBCELLULAR LOCATION</scope>
    <scope>INDUCTION</scope>
    <scope>DISRUPTION PHENOTYPE</scope>
    <source>
        <strain>cv. Columbia</strain>
    </source>
</reference>
<reference key="2">
    <citation type="journal article" date="2000" name="Nature">
        <title>Sequence and analysis of chromosome 3 of the plant Arabidopsis thaliana.</title>
        <authorList>
            <person name="Salanoubat M."/>
            <person name="Lemcke K."/>
            <person name="Rieger M."/>
            <person name="Ansorge W."/>
            <person name="Unseld M."/>
            <person name="Fartmann B."/>
            <person name="Valle G."/>
            <person name="Bloecker H."/>
            <person name="Perez-Alonso M."/>
            <person name="Obermaier B."/>
            <person name="Delseny M."/>
            <person name="Boutry M."/>
            <person name="Grivell L.A."/>
            <person name="Mache R."/>
            <person name="Puigdomenech P."/>
            <person name="De Simone V."/>
            <person name="Choisne N."/>
            <person name="Artiguenave F."/>
            <person name="Robert C."/>
            <person name="Brottier P."/>
            <person name="Wincker P."/>
            <person name="Cattolico L."/>
            <person name="Weissenbach J."/>
            <person name="Saurin W."/>
            <person name="Quetier F."/>
            <person name="Schaefer M."/>
            <person name="Mueller-Auer S."/>
            <person name="Gabel C."/>
            <person name="Fuchs M."/>
            <person name="Benes V."/>
            <person name="Wurmbach E."/>
            <person name="Drzonek H."/>
            <person name="Erfle H."/>
            <person name="Jordan N."/>
            <person name="Bangert S."/>
            <person name="Wiedelmann R."/>
            <person name="Kranz H."/>
            <person name="Voss H."/>
            <person name="Holland R."/>
            <person name="Brandt P."/>
            <person name="Nyakatura G."/>
            <person name="Vezzi A."/>
            <person name="D'Angelo M."/>
            <person name="Pallavicini A."/>
            <person name="Toppo S."/>
            <person name="Simionati B."/>
            <person name="Conrad A."/>
            <person name="Hornischer K."/>
            <person name="Kauer G."/>
            <person name="Loehnert T.-H."/>
            <person name="Nordsiek G."/>
            <person name="Reichelt J."/>
            <person name="Scharfe M."/>
            <person name="Schoen O."/>
            <person name="Bargues M."/>
            <person name="Terol J."/>
            <person name="Climent J."/>
            <person name="Navarro P."/>
            <person name="Collado C."/>
            <person name="Perez-Perez A."/>
            <person name="Ottenwaelder B."/>
            <person name="Duchemin D."/>
            <person name="Cooke R."/>
            <person name="Laudie M."/>
            <person name="Berger-Llauro C."/>
            <person name="Purnelle B."/>
            <person name="Masuy D."/>
            <person name="de Haan M."/>
            <person name="Maarse A.C."/>
            <person name="Alcaraz J.-P."/>
            <person name="Cottet A."/>
            <person name="Casacuberta E."/>
            <person name="Monfort A."/>
            <person name="Argiriou A."/>
            <person name="Flores M."/>
            <person name="Liguori R."/>
            <person name="Vitale D."/>
            <person name="Mannhaupt G."/>
            <person name="Haase D."/>
            <person name="Schoof H."/>
            <person name="Rudd S."/>
            <person name="Zaccaria P."/>
            <person name="Mewes H.-W."/>
            <person name="Mayer K.F.X."/>
            <person name="Kaul S."/>
            <person name="Town C.D."/>
            <person name="Koo H.L."/>
            <person name="Tallon L.J."/>
            <person name="Jenkins J."/>
            <person name="Rooney T."/>
            <person name="Rizzo M."/>
            <person name="Walts A."/>
            <person name="Utterback T."/>
            <person name="Fujii C.Y."/>
            <person name="Shea T.P."/>
            <person name="Creasy T.H."/>
            <person name="Haas B."/>
            <person name="Maiti R."/>
            <person name="Wu D."/>
            <person name="Peterson J."/>
            <person name="Van Aken S."/>
            <person name="Pai G."/>
            <person name="Militscher J."/>
            <person name="Sellers P."/>
            <person name="Gill J.E."/>
            <person name="Feldblyum T.V."/>
            <person name="Preuss D."/>
            <person name="Lin X."/>
            <person name="Nierman W.C."/>
            <person name="Salzberg S.L."/>
            <person name="White O."/>
            <person name="Venter J.C."/>
            <person name="Fraser C.M."/>
            <person name="Kaneko T."/>
            <person name="Nakamura Y."/>
            <person name="Sato S."/>
            <person name="Kato T."/>
            <person name="Asamizu E."/>
            <person name="Sasamoto S."/>
            <person name="Kimura T."/>
            <person name="Idesawa K."/>
            <person name="Kawashima K."/>
            <person name="Kishida Y."/>
            <person name="Kiyokawa C."/>
            <person name="Kohara M."/>
            <person name="Matsumoto M."/>
            <person name="Matsuno A."/>
            <person name="Muraki A."/>
            <person name="Nakayama S."/>
            <person name="Nakazaki N."/>
            <person name="Shinpo S."/>
            <person name="Takeuchi C."/>
            <person name="Wada T."/>
            <person name="Watanabe A."/>
            <person name="Yamada M."/>
            <person name="Yasuda M."/>
            <person name="Tabata S."/>
        </authorList>
    </citation>
    <scope>NUCLEOTIDE SEQUENCE [LARGE SCALE GENOMIC DNA]</scope>
    <source>
        <strain>cv. Columbia</strain>
    </source>
</reference>
<reference key="3">
    <citation type="journal article" date="2017" name="Plant J.">
        <title>Araport11: a complete reannotation of the Arabidopsis thaliana reference genome.</title>
        <authorList>
            <person name="Cheng C.Y."/>
            <person name="Krishnakumar V."/>
            <person name="Chan A.P."/>
            <person name="Thibaud-Nissen F."/>
            <person name="Schobel S."/>
            <person name="Town C.D."/>
        </authorList>
    </citation>
    <scope>GENOME REANNOTATION</scope>
    <source>
        <strain>cv. Columbia</strain>
    </source>
</reference>
<reference key="4">
    <citation type="journal article" date="2003" name="Science">
        <title>Empirical analysis of transcriptional activity in the Arabidopsis genome.</title>
        <authorList>
            <person name="Yamada K."/>
            <person name="Lim J."/>
            <person name="Dale J.M."/>
            <person name="Chen H."/>
            <person name="Shinn P."/>
            <person name="Palm C.J."/>
            <person name="Southwick A.M."/>
            <person name="Wu H.C."/>
            <person name="Kim C.J."/>
            <person name="Nguyen M."/>
            <person name="Pham P.K."/>
            <person name="Cheuk R.F."/>
            <person name="Karlin-Newmann G."/>
            <person name="Liu S.X."/>
            <person name="Lam B."/>
            <person name="Sakano H."/>
            <person name="Wu T."/>
            <person name="Yu G."/>
            <person name="Miranda M."/>
            <person name="Quach H.L."/>
            <person name="Tripp M."/>
            <person name="Chang C.H."/>
            <person name="Lee J.M."/>
            <person name="Toriumi M.J."/>
            <person name="Chan M.M."/>
            <person name="Tang C.C."/>
            <person name="Onodera C.S."/>
            <person name="Deng J.M."/>
            <person name="Akiyama K."/>
            <person name="Ansari Y."/>
            <person name="Arakawa T."/>
            <person name="Banh J."/>
            <person name="Banno F."/>
            <person name="Bowser L."/>
            <person name="Brooks S.Y."/>
            <person name="Carninci P."/>
            <person name="Chao Q."/>
            <person name="Choy N."/>
            <person name="Enju A."/>
            <person name="Goldsmith A.D."/>
            <person name="Gurjal M."/>
            <person name="Hansen N.F."/>
            <person name="Hayashizaki Y."/>
            <person name="Johnson-Hopson C."/>
            <person name="Hsuan V.W."/>
            <person name="Iida K."/>
            <person name="Karnes M."/>
            <person name="Khan S."/>
            <person name="Koesema E."/>
            <person name="Ishida J."/>
            <person name="Jiang P.X."/>
            <person name="Jones T."/>
            <person name="Kawai J."/>
            <person name="Kamiya A."/>
            <person name="Meyers C."/>
            <person name="Nakajima M."/>
            <person name="Narusaka M."/>
            <person name="Seki M."/>
            <person name="Sakurai T."/>
            <person name="Satou M."/>
            <person name="Tamse R."/>
            <person name="Vaysberg M."/>
            <person name="Wallender E.K."/>
            <person name="Wong C."/>
            <person name="Yamamura Y."/>
            <person name="Yuan S."/>
            <person name="Shinozaki K."/>
            <person name="Davis R.W."/>
            <person name="Theologis A."/>
            <person name="Ecker J.R."/>
        </authorList>
    </citation>
    <scope>NUCLEOTIDE SEQUENCE [LARGE SCALE MRNA]</scope>
    <source>
        <strain>cv. Columbia</strain>
    </source>
</reference>
<reference key="5">
    <citation type="journal article" date="2009" name="DNA Res.">
        <title>Analysis of multiple occurrences of alternative splicing events in Arabidopsis thaliana using novel sequenced full-length cDNAs.</title>
        <authorList>
            <person name="Iida K."/>
            <person name="Fukami-Kobayashi K."/>
            <person name="Toyoda A."/>
            <person name="Sakaki Y."/>
            <person name="Kobayashi M."/>
            <person name="Seki M."/>
            <person name="Shinozaki K."/>
        </authorList>
    </citation>
    <scope>NUCLEOTIDE SEQUENCE [LARGE SCALE MRNA]</scope>
    <source>
        <strain>cv. Columbia</strain>
    </source>
</reference>
<reference key="6">
    <citation type="submission" date="2006-07" db="EMBL/GenBank/DDBJ databases">
        <title>Large-scale analysis of RIKEN Arabidopsis full-length (RAFL) cDNAs.</title>
        <authorList>
            <person name="Totoki Y."/>
            <person name="Seki M."/>
            <person name="Ishida J."/>
            <person name="Nakajima M."/>
            <person name="Enju A."/>
            <person name="Kamiya A."/>
            <person name="Narusaka M."/>
            <person name="Shin-i T."/>
            <person name="Nakagawa M."/>
            <person name="Sakamoto N."/>
            <person name="Oishi K."/>
            <person name="Kohara Y."/>
            <person name="Kobayashi M."/>
            <person name="Toyoda A."/>
            <person name="Sakaki Y."/>
            <person name="Sakurai T."/>
            <person name="Iida K."/>
            <person name="Akiyama K."/>
            <person name="Satou M."/>
            <person name="Toyoda T."/>
            <person name="Konagaya A."/>
            <person name="Carninci P."/>
            <person name="Kawai J."/>
            <person name="Hayashizaki Y."/>
            <person name="Shinozaki K."/>
        </authorList>
    </citation>
    <scope>NUCLEOTIDE SEQUENCE [LARGE SCALE MRNA]</scope>
    <source>
        <strain>cv. Columbia</strain>
    </source>
</reference>
<reference key="7">
    <citation type="journal article" date="2005" name="Proc. Natl. Acad. Sci. U.S.A.">
        <title>LUX ARRHYTHMO encodes a Myb domain protein essential for circadian rhythms.</title>
        <authorList>
            <person name="Hazen S.P."/>
            <person name="Schultz T.F."/>
            <person name="Pruneda-Paz J.L."/>
            <person name="Borevitz J.O."/>
            <person name="Ecker J.R."/>
            <person name="Kay S.A."/>
        </authorList>
    </citation>
    <scope>FUNCTION</scope>
    <scope>INDUCTION</scope>
    <scope>DISRUPTION PHENOTYPE</scope>
    <scope>MUTAGENESIS OF PRO-171</scope>
</reference>
<reference key="8">
    <citation type="journal article" date="2007" name="Plant Cell Physiol.">
        <title>Comparative overviews of clock-associated genes of Arabidopsis thaliana and Oryza sativa.</title>
        <authorList>
            <person name="Murakami M."/>
            <person name="Tago Y."/>
            <person name="Yamashino T."/>
            <person name="Mizuno T."/>
        </authorList>
    </citation>
    <scope>INDUCTION</scope>
</reference>
<reference key="9">
    <citation type="journal article" date="2011" name="Curr. Biol.">
        <title>LUX ARRHYTHMO encodes a nighttime repressor of circadian gene expression in the Arabidopsis core clock.</title>
        <authorList>
            <person name="Helfer A."/>
            <person name="Nusinow D.A."/>
            <person name="Chow B.Y."/>
            <person name="Gehrke A.R."/>
            <person name="Bulyk M.L."/>
            <person name="Kay S.A."/>
        </authorList>
    </citation>
    <scope>FUNCTION</scope>
</reference>
<reference key="10">
    <citation type="journal article" date="2011" name="Nature">
        <title>The ELF4-ELF3-LUX complex links the circadian clock to diurnal control of hypocotyl growth.</title>
        <authorList>
            <person name="Nusinow D.A."/>
            <person name="Helfer A."/>
            <person name="Hamilton E.E."/>
            <person name="King J.J."/>
            <person name="Imaizumi T."/>
            <person name="Schultz T.F."/>
            <person name="Farre E.M."/>
            <person name="Kay S.A."/>
        </authorList>
    </citation>
    <scope>FUNCTION</scope>
    <scope>INTERACTION WITH ELF3</scope>
    <scope>INDUCTION</scope>
</reference>
<reference key="11">
    <citation type="journal article" date="2012" name="Plant Signal. Behav.">
        <title>ELF3 recruitment to the PRR9 promoter requires other Evening Complex members in the Arabidopsis circadian clock.</title>
        <authorList>
            <person name="Chow B.Y."/>
            <person name="Helfer A."/>
            <person name="Nusinow D.A."/>
            <person name="Kay S.A."/>
        </authorList>
    </citation>
    <scope>INTERACTION WITH ELF3</scope>
</reference>
<reference key="12">
    <citation type="journal article" date="2012" name="Mol. Plant">
        <title>Diurnal dependence of growth responses to shade in Arabidopsis: role of hormone, clock, and light signaling.</title>
        <authorList>
            <person name="Sellaro R."/>
            <person name="Pacin M."/>
            <person name="Casal J.J."/>
        </authorList>
    </citation>
    <scope>FUNCTION</scope>
</reference>
<reference key="13">
    <citation type="journal article" date="2012" name="Plant Cell">
        <title>EARLY FLOWERING4 recruitment of EARLY FLOWERING3 in the nucleus sustains the Arabidopsis circadian clock.</title>
        <authorList>
            <person name="Herrero E."/>
            <person name="Kolmos E."/>
            <person name="Bujdoso N."/>
            <person name="Yuan Y."/>
            <person name="Wang M."/>
            <person name="Berns M.C."/>
            <person name="Uhlworm H."/>
            <person name="Coupland G."/>
            <person name="Saini R."/>
            <person name="Jaskolski M."/>
            <person name="Webb A."/>
            <person name="Goncalves J."/>
            <person name="Davis S.J."/>
        </authorList>
    </citation>
    <scope>SUBCELLULAR LOCATION</scope>
</reference>
<organism>
    <name type="scientific">Arabidopsis thaliana</name>
    <name type="common">Mouse-ear cress</name>
    <dbReference type="NCBI Taxonomy" id="3702"/>
    <lineage>
        <taxon>Eukaryota</taxon>
        <taxon>Viridiplantae</taxon>
        <taxon>Streptophyta</taxon>
        <taxon>Embryophyta</taxon>
        <taxon>Tracheophyta</taxon>
        <taxon>Spermatophyta</taxon>
        <taxon>Magnoliopsida</taxon>
        <taxon>eudicotyledons</taxon>
        <taxon>Gunneridae</taxon>
        <taxon>Pentapetalae</taxon>
        <taxon>rosids</taxon>
        <taxon>malvids</taxon>
        <taxon>Brassicales</taxon>
        <taxon>Brassicaceae</taxon>
        <taxon>Camelineae</taxon>
        <taxon>Arabidopsis</taxon>
    </lineage>
</organism>
<evidence type="ECO:0000255" key="1">
    <source>
        <dbReference type="PROSITE-ProRule" id="PRU00625"/>
    </source>
</evidence>
<evidence type="ECO:0000256" key="2">
    <source>
        <dbReference type="SAM" id="MobiDB-lite"/>
    </source>
</evidence>
<evidence type="ECO:0000269" key="3">
    <source>
    </source>
</evidence>
<evidence type="ECO:0000269" key="4">
    <source>
    </source>
</evidence>
<evidence type="ECO:0000269" key="5">
    <source>
    </source>
</evidence>
<evidence type="ECO:0000269" key="6">
    <source>
    </source>
</evidence>
<evidence type="ECO:0000269" key="7">
    <source>
    </source>
</evidence>
<evidence type="ECO:0000269" key="8">
    <source>
    </source>
</evidence>
<evidence type="ECO:0000269" key="9">
    <source>
    </source>
</evidence>
<evidence type="ECO:0000269" key="10">
    <source>
    </source>
</evidence>
<evidence type="ECO:0000305" key="11"/>
<evidence type="ECO:0007829" key="12">
    <source>
        <dbReference type="PDB" id="6QEC"/>
    </source>
</evidence>
<name>PCL1_ARATH</name>
<protein>
    <recommendedName>
        <fullName>Transcription factor LUX</fullName>
    </recommendedName>
    <alternativeName>
        <fullName>Protein LUX ARRHYTHMO</fullName>
    </alternativeName>
    <alternativeName>
        <fullName>Protein PHYTOCLOCK 1</fullName>
    </alternativeName>
</protein>
<comment type="function">
    <text evidence="3 4 6 7 9">Transcription factor that is essential for the generation of the circadian clock oscillation. Is necessary for activation of CCA1 and LHY expression. Is coregulated with TOC1 and seems to be repressed by CCA1 and LHY by direct binding of these proteins to the evening element in the LUX promoter. Directly regulates the expression of PRR9, a major component of the morning transcriptional feedback circuit, by binding specific sites on PRR9 promoter. Binds to its own promoter, inducing a negative auto-regulatory feedback loop within the core clock. Binds to ELF3 and associates with ELF4 in a diurnal complex which is required for the expression of the growth-promoting transcription factors PIF4 and PIF5 and subsequent hypocotyl growth in the early evening.</text>
</comment>
<comment type="subunit">
    <text evidence="7 8">Interacts with ELF3 and forms a complex with ELF3 and ELF4.</text>
</comment>
<comment type="subcellular location">
    <subcellularLocation>
        <location evidence="1 4 10">Nucleus</location>
    </subcellularLocation>
</comment>
<comment type="alternative products">
    <event type="alternative splicing"/>
    <isoform>
        <id>Q9SNB4-1</id>
        <name>1</name>
        <sequence type="displayed"/>
    </isoform>
    <text>A number of isoforms are produced. According to EST sequences.</text>
</comment>
<comment type="induction">
    <text evidence="3 4 5 7">Circadian oscillation with peaks at subjective dusk.</text>
</comment>
<comment type="disruption phenotype">
    <text evidence="3 4">Mutant plant flowering lacks a photoperiodic response.</text>
</comment>
<sequence length="323" mass="34649">MGEEVQMSDYDVSGDGDRVSEWEMGLPSDEDLASLSYSLIPPNLAMAFSITPERSRTIQDVNRASETTLSSLRGGSSGPNTSSSNNNVEEEDRVGSSSPGSDSKKQKTSNGDGDDGGGVDPDSAMAAEEGDSGTEDLSGKTLKRPRLVWTPQLHKRFVDVVAHLGIKNAVPKTIMQLMNVEGLTRENVASHLQKYRLYLKRMQGLTNEGPSASDKLFSSTPVPPQSFQDIGGGGGSSGNVGVPIPGAYGTQQMMQMPVYAHHMGMQGYHHQNHNHDPYHQNHRHHHGAGGNGAFESNPYMMQQNKFGSMASYPSVGGGSANEN</sequence>
<dbReference type="EMBL" id="AB206576">
    <property type="protein sequence ID" value="BAE16277.1"/>
    <property type="molecule type" value="Genomic_DNA"/>
</dbReference>
<dbReference type="EMBL" id="AL133314">
    <property type="protein sequence ID" value="CAB62334.1"/>
    <property type="molecule type" value="Genomic_DNA"/>
</dbReference>
<dbReference type="EMBL" id="CP002686">
    <property type="protein sequence ID" value="AEE78186.1"/>
    <property type="molecule type" value="Genomic_DNA"/>
</dbReference>
<dbReference type="EMBL" id="CP002686">
    <property type="protein sequence ID" value="AEE78187.1"/>
    <property type="molecule type" value="Genomic_DNA"/>
</dbReference>
<dbReference type="EMBL" id="BT006425">
    <property type="protein sequence ID" value="AAP21233.1"/>
    <property type="molecule type" value="mRNA"/>
</dbReference>
<dbReference type="EMBL" id="AK319175">
    <property type="protein sequence ID" value="BAH20438.1"/>
    <property type="molecule type" value="mRNA"/>
</dbReference>
<dbReference type="EMBL" id="AK227686">
    <property type="protein sequence ID" value="BAE99673.1"/>
    <property type="molecule type" value="mRNA"/>
</dbReference>
<dbReference type="PIR" id="T45601">
    <property type="entry name" value="T45601"/>
</dbReference>
<dbReference type="RefSeq" id="NP_001030823.1">
    <molecule id="Q9SNB4-1"/>
    <property type="nucleotide sequence ID" value="NM_001035746.2"/>
</dbReference>
<dbReference type="RefSeq" id="NP_190248.1">
    <molecule id="Q9SNB4-1"/>
    <property type="nucleotide sequence ID" value="NM_114531.3"/>
</dbReference>
<dbReference type="PDB" id="5LXU">
    <property type="method" value="X-ray"/>
    <property type="resolution" value="2.14 A"/>
    <property type="chains" value="A=144-200"/>
</dbReference>
<dbReference type="PDB" id="6QEC">
    <property type="method" value="X-ray"/>
    <property type="resolution" value="1.90 A"/>
    <property type="chains" value="A=139-200"/>
</dbReference>
<dbReference type="PDBsum" id="5LXU"/>
<dbReference type="PDBsum" id="6QEC"/>
<dbReference type="SMR" id="Q9SNB4"/>
<dbReference type="BioGRID" id="9137">
    <property type="interactions" value="8"/>
</dbReference>
<dbReference type="ComplexPortal" id="CPX-1291">
    <property type="entry name" value="Evening Complex"/>
</dbReference>
<dbReference type="FunCoup" id="Q9SNB4">
    <property type="interactions" value="175"/>
</dbReference>
<dbReference type="IntAct" id="Q9SNB4">
    <property type="interactions" value="5"/>
</dbReference>
<dbReference type="STRING" id="3702.Q9SNB4"/>
<dbReference type="iPTMnet" id="Q9SNB4"/>
<dbReference type="PaxDb" id="3702-AT3G46640.3"/>
<dbReference type="ProteomicsDB" id="236384">
    <molecule id="Q9SNB4-1"/>
</dbReference>
<dbReference type="EnsemblPlants" id="AT3G46640.1">
    <molecule id="Q9SNB4-1"/>
    <property type="protein sequence ID" value="AT3G46640.1"/>
    <property type="gene ID" value="AT3G46640"/>
</dbReference>
<dbReference type="EnsemblPlants" id="AT3G46640.2">
    <molecule id="Q9SNB4-1"/>
    <property type="protein sequence ID" value="AT3G46640.2"/>
    <property type="gene ID" value="AT3G46640"/>
</dbReference>
<dbReference type="GeneID" id="823817"/>
<dbReference type="Gramene" id="AT3G46640.1">
    <molecule id="Q9SNB4-1"/>
    <property type="protein sequence ID" value="AT3G46640.1"/>
    <property type="gene ID" value="AT3G46640"/>
</dbReference>
<dbReference type="Gramene" id="AT3G46640.2">
    <molecule id="Q9SNB4-1"/>
    <property type="protein sequence ID" value="AT3G46640.2"/>
    <property type="gene ID" value="AT3G46640"/>
</dbReference>
<dbReference type="KEGG" id="ath:AT3G46640"/>
<dbReference type="Araport" id="AT3G46640"/>
<dbReference type="TAIR" id="AT3G46640">
    <property type="gene designation" value="PCL1"/>
</dbReference>
<dbReference type="eggNOG" id="ENOG502RIEW">
    <property type="taxonomic scope" value="Eukaryota"/>
</dbReference>
<dbReference type="HOGENOM" id="CLU_055357_1_0_1"/>
<dbReference type="InParanoid" id="Q9SNB4"/>
<dbReference type="OMA" id="GFESHHY"/>
<dbReference type="OrthoDB" id="60033at2759"/>
<dbReference type="PhylomeDB" id="Q9SNB4"/>
<dbReference type="PRO" id="PR:Q9SNB4"/>
<dbReference type="Proteomes" id="UP000006548">
    <property type="component" value="Chromosome 3"/>
</dbReference>
<dbReference type="ExpressionAtlas" id="Q9SNB4">
    <property type="expression patterns" value="baseline and differential"/>
</dbReference>
<dbReference type="GO" id="GO:0005634">
    <property type="term" value="C:nucleus"/>
    <property type="evidence" value="ECO:0000314"/>
    <property type="project" value="UniProtKB"/>
</dbReference>
<dbReference type="GO" id="GO:0005667">
    <property type="term" value="C:transcription regulator complex"/>
    <property type="evidence" value="ECO:0000314"/>
    <property type="project" value="ComplexPortal"/>
</dbReference>
<dbReference type="GO" id="GO:0003677">
    <property type="term" value="F:DNA binding"/>
    <property type="evidence" value="ECO:0007669"/>
    <property type="project" value="UniProtKB-KW"/>
</dbReference>
<dbReference type="GO" id="GO:0003700">
    <property type="term" value="F:DNA-binding transcription factor activity"/>
    <property type="evidence" value="ECO:0007669"/>
    <property type="project" value="InterPro"/>
</dbReference>
<dbReference type="GO" id="GO:0007623">
    <property type="term" value="P:circadian rhythm"/>
    <property type="evidence" value="ECO:0000270"/>
    <property type="project" value="UniProtKB"/>
</dbReference>
<dbReference type="GO" id="GO:0000122">
    <property type="term" value="P:negative regulation of transcription by RNA polymerase II"/>
    <property type="evidence" value="ECO:0000314"/>
    <property type="project" value="ComplexPortal"/>
</dbReference>
<dbReference type="GO" id="GO:0042753">
    <property type="term" value="P:positive regulation of circadian rhythm"/>
    <property type="evidence" value="ECO:0000315"/>
    <property type="project" value="UniProtKB"/>
</dbReference>
<dbReference type="GO" id="GO:0042752">
    <property type="term" value="P:regulation of circadian rhythm"/>
    <property type="evidence" value="ECO:0000314"/>
    <property type="project" value="ComplexPortal"/>
</dbReference>
<dbReference type="FunFam" id="1.10.10.60:FF:000007">
    <property type="entry name" value="Two-component response regulator"/>
    <property type="match status" value="1"/>
</dbReference>
<dbReference type="Gene3D" id="1.10.10.60">
    <property type="entry name" value="Homeodomain-like"/>
    <property type="match status" value="1"/>
</dbReference>
<dbReference type="InterPro" id="IPR009057">
    <property type="entry name" value="Homeodomain-like_sf"/>
</dbReference>
<dbReference type="InterPro" id="IPR044841">
    <property type="entry name" value="LUX/BOA-like"/>
</dbReference>
<dbReference type="InterPro" id="IPR017930">
    <property type="entry name" value="Myb_dom"/>
</dbReference>
<dbReference type="InterPro" id="IPR006447">
    <property type="entry name" value="Myb_dom_plants"/>
</dbReference>
<dbReference type="InterPro" id="IPR001005">
    <property type="entry name" value="SANT/Myb"/>
</dbReference>
<dbReference type="NCBIfam" id="TIGR01557">
    <property type="entry name" value="myb_SHAQKYF"/>
    <property type="match status" value="1"/>
</dbReference>
<dbReference type="PANTHER" id="PTHR31442">
    <property type="entry name" value="HOMEODOMAIN-LIKE SUPERFAMILY PROTEIN-RELATED"/>
    <property type="match status" value="1"/>
</dbReference>
<dbReference type="PANTHER" id="PTHR31442:SF21">
    <property type="entry name" value="TRANSCRIPTION FACTOR BOA-RELATED"/>
    <property type="match status" value="1"/>
</dbReference>
<dbReference type="Pfam" id="PF00249">
    <property type="entry name" value="Myb_DNA-binding"/>
    <property type="match status" value="1"/>
</dbReference>
<dbReference type="SUPFAM" id="SSF46689">
    <property type="entry name" value="Homeodomain-like"/>
    <property type="match status" value="1"/>
</dbReference>
<dbReference type="PROSITE" id="PS51294">
    <property type="entry name" value="HTH_MYB"/>
    <property type="match status" value="1"/>
</dbReference>
<proteinExistence type="evidence at protein level"/>
<accession>Q9SNB4</accession>
<accession>B9DI71</accession>
<feature type="chain" id="PRO_0000422983" description="Transcription factor LUX">
    <location>
        <begin position="1"/>
        <end position="323"/>
    </location>
</feature>
<feature type="DNA-binding region" description="Myb-like GARP" evidence="1">
    <location>
        <begin position="139"/>
        <end position="200"/>
    </location>
</feature>
<feature type="region of interest" description="Disordered" evidence="2">
    <location>
        <begin position="1"/>
        <end position="25"/>
    </location>
</feature>
<feature type="region of interest" description="Disordered" evidence="2">
    <location>
        <begin position="53"/>
        <end position="139"/>
    </location>
</feature>
<feature type="region of interest" description="Disordered" evidence="2">
    <location>
        <begin position="267"/>
        <end position="298"/>
    </location>
</feature>
<feature type="compositionally biased region" description="Low complexity" evidence="2">
    <location>
        <begin position="65"/>
        <end position="87"/>
    </location>
</feature>
<feature type="mutagenesis site" description="In lux-5; compromised circadian clock." evidence="3">
    <original>P</original>
    <variation>L</variation>
    <location>
        <position position="171"/>
    </location>
</feature>
<feature type="sequence conflict" description="In Ref. 5; BAH20438." evidence="11" ref="5">
    <original>L</original>
    <variation>V</variation>
    <location>
        <position position="177"/>
    </location>
</feature>
<feature type="sequence conflict" description="In Ref. 5; BAH20438." evidence="11" ref="5">
    <original>H</original>
    <variation>R</variation>
    <location>
        <position position="275"/>
    </location>
</feature>
<feature type="helix" evidence="12">
    <location>
        <begin position="139"/>
        <end position="141"/>
    </location>
</feature>
<feature type="helix" evidence="12">
    <location>
        <begin position="151"/>
        <end position="163"/>
    </location>
</feature>
<feature type="helix" evidence="12">
    <location>
        <begin position="166"/>
        <end position="168"/>
    </location>
</feature>
<feature type="helix" evidence="12">
    <location>
        <begin position="171"/>
        <end position="178"/>
    </location>
</feature>
<feature type="helix" evidence="12">
    <location>
        <begin position="185"/>
        <end position="199"/>
    </location>
</feature>